<name>SC16B_HUMAN</name>
<proteinExistence type="evidence at protein level"/>
<protein>
    <recommendedName>
        <fullName>Protein transport protein Sec16B</fullName>
    </recommendedName>
    <alternativeName>
        <fullName>Leucine zipper transcription regulator 2</fullName>
    </alternativeName>
    <alternativeName>
        <fullName>Regucalcin gene promoter region-related protein p117</fullName>
        <shortName>RGPR-p117</shortName>
    </alternativeName>
    <alternativeName>
        <fullName>SEC16 homolog B</fullName>
    </alternativeName>
</protein>
<feature type="chain" id="PRO_0000341974" description="Protein transport protein Sec16B">
    <location>
        <begin position="1"/>
        <end position="1060"/>
    </location>
</feature>
<feature type="region of interest" description="Disordered" evidence="4">
    <location>
        <begin position="1"/>
        <end position="86"/>
    </location>
</feature>
<feature type="region of interest" description="Required for endoplasmic reticulum localization">
    <location>
        <begin position="34"/>
        <end position="224"/>
    </location>
</feature>
<feature type="region of interest" description="Disordered" evidence="4">
    <location>
        <begin position="163"/>
        <end position="236"/>
    </location>
</feature>
<feature type="region of interest" description="Disordered" evidence="4">
    <location>
        <begin position="245"/>
        <end position="264"/>
    </location>
</feature>
<feature type="region of interest" description="Central conserved domain (CCD); required for localization to endoplasmic reticulum exit sites" evidence="11">
    <location>
        <begin position="271"/>
        <end position="713"/>
    </location>
</feature>
<feature type="region of interest" description="Disordered" evidence="4">
    <location>
        <begin position="711"/>
        <end position="733"/>
    </location>
</feature>
<feature type="region of interest" description="Disordered" evidence="4">
    <location>
        <begin position="770"/>
        <end position="796"/>
    </location>
</feature>
<feature type="region of interest" description="Disordered" evidence="4">
    <location>
        <begin position="834"/>
        <end position="1060"/>
    </location>
</feature>
<feature type="compositionally biased region" description="Basic and acidic residues" evidence="4">
    <location>
        <begin position="41"/>
        <end position="50"/>
    </location>
</feature>
<feature type="compositionally biased region" description="Polar residues" evidence="4">
    <location>
        <begin position="51"/>
        <end position="60"/>
    </location>
</feature>
<feature type="compositionally biased region" description="Polar residues" evidence="4">
    <location>
        <begin position="165"/>
        <end position="195"/>
    </location>
</feature>
<feature type="compositionally biased region" description="Polar residues" evidence="4">
    <location>
        <begin position="213"/>
        <end position="222"/>
    </location>
</feature>
<feature type="compositionally biased region" description="Low complexity" evidence="4">
    <location>
        <begin position="223"/>
        <end position="236"/>
    </location>
</feature>
<feature type="compositionally biased region" description="Polar residues" evidence="4">
    <location>
        <begin position="837"/>
        <end position="847"/>
    </location>
</feature>
<feature type="compositionally biased region" description="Basic and acidic residues" evidence="4">
    <location>
        <begin position="875"/>
        <end position="890"/>
    </location>
</feature>
<feature type="compositionally biased region" description="Basic and acidic residues" evidence="4">
    <location>
        <begin position="899"/>
        <end position="908"/>
    </location>
</feature>
<feature type="compositionally biased region" description="Low complexity" evidence="4">
    <location>
        <begin position="909"/>
        <end position="918"/>
    </location>
</feature>
<feature type="compositionally biased region" description="Acidic residues" evidence="4">
    <location>
        <begin position="930"/>
        <end position="941"/>
    </location>
</feature>
<feature type="compositionally biased region" description="Gly residues" evidence="4">
    <location>
        <begin position="991"/>
        <end position="1001"/>
    </location>
</feature>
<feature type="compositionally biased region" description="Polar residues" evidence="4">
    <location>
        <begin position="1031"/>
        <end position="1046"/>
    </location>
</feature>
<feature type="modified residue" description="Phosphoserine" evidence="17">
    <location>
        <position position="55"/>
    </location>
</feature>
<feature type="modified residue" description="Phosphoserine" evidence="2">
    <location>
        <position position="143"/>
    </location>
</feature>
<feature type="modified residue" description="Phosphoserine" evidence="17">
    <location>
        <position position="167"/>
    </location>
</feature>
<feature type="modified residue" description="Phosphoserine" evidence="3">
    <location>
        <position position="188"/>
    </location>
</feature>
<feature type="modified residue" description="Phosphoserine" evidence="3">
    <location>
        <position position="191"/>
    </location>
</feature>
<feature type="modified residue" description="Phosphoserine" evidence="17">
    <location>
        <position position="254"/>
    </location>
</feature>
<feature type="modified residue" description="Phosphoserine" evidence="17">
    <location>
        <position position="258"/>
    </location>
</feature>
<feature type="modified residue" description="Phosphothreonine" evidence="17">
    <location>
        <position position="858"/>
    </location>
</feature>
<feature type="modified residue" description="Phosphoserine" evidence="2">
    <location>
        <position position="868"/>
    </location>
</feature>
<feature type="modified residue" description="Phosphoserine" evidence="3">
    <location>
        <position position="871"/>
    </location>
</feature>
<feature type="modified residue" description="Phosphoserine" evidence="3">
    <location>
        <position position="874"/>
    </location>
</feature>
<feature type="modified residue" description="Phosphoserine" evidence="3">
    <location>
        <position position="882"/>
    </location>
</feature>
<feature type="modified residue" description="Phosphoserine" evidence="3">
    <location>
        <position position="883"/>
    </location>
</feature>
<feature type="splice variant" id="VSP_034371" description="In isoform 3." evidence="13">
    <location>
        <begin position="1"/>
        <end position="435"/>
    </location>
</feature>
<feature type="splice variant" id="VSP_034372" description="In isoform 3." evidence="13">
    <original>ETPAQIVEKFTRLLYYGRKKEALEWAMKNHLWGHALFLSSKMDPQTYSWVMSGFTSTLALNDPLQTLFQLMSGRIPQAAT</original>
    <variation>MRGFVHFHHAAYSFLPPGGILLPLHRPSWATWLDFLILKVAVGTRLHRVPVKIKRMCVNGLCRARKHRHL</variation>
    <location>
        <begin position="436"/>
        <end position="515"/>
    </location>
</feature>
<feature type="splice variant" id="VSP_034373" description="In isoform 2." evidence="14">
    <original>SQEFLKFATTEAIQRTEIFEYCQMLGRPKSFIP</original>
    <variation>RYATWEKGNSKDIFQGTVLALVGFYGSSFHFLM</variation>
    <location>
        <begin position="592"/>
        <end position="624"/>
    </location>
</feature>
<feature type="splice variant" id="VSP_034374" description="In isoform 2." evidence="14">
    <location>
        <begin position="625"/>
        <end position="1060"/>
    </location>
</feature>
<feature type="splice variant" id="VSP_034375" description="In isoform 3." evidence="13">
    <original>ETPRASSPHQAGLGLSLTPSPESPPLPDVSAFSRGRGGGEGRGSA</original>
    <variation>VGVKAEDPHPAGGQLRALGLEACLDQRVFPLSSAPTLVFFFLHLP</variation>
    <location>
        <begin position="942"/>
        <end position="986"/>
    </location>
</feature>
<feature type="splice variant" id="VSP_034376" description="In isoform 3." evidence="13">
    <location>
        <begin position="987"/>
        <end position="1060"/>
    </location>
</feature>
<feature type="sequence variant" id="VAR_044130" description="In dbSNP:rs12040910." evidence="7 8">
    <original>H</original>
    <variation>R</variation>
    <location>
        <position position="292"/>
    </location>
</feature>
<feature type="sequence variant" id="VAR_044131" description="In dbSNP:rs943762." evidence="5">
    <original>G</original>
    <variation>R</variation>
    <location>
        <position position="730"/>
    </location>
</feature>
<feature type="sequence variant" id="VAR_044132" description="In dbSNP:rs7522194." evidence="9">
    <original>Q</original>
    <variation>H</variation>
    <location>
        <position position="845"/>
    </location>
</feature>
<feature type="sequence variant" id="VAR_044133" description="In dbSNP:rs591120." evidence="9">
    <original>P</original>
    <variation>A</variation>
    <location>
        <position position="864"/>
    </location>
</feature>
<feature type="sequence variant" id="VAR_044134" description="In dbSNP:rs3813649." evidence="9">
    <original>S</original>
    <variation>N</variation>
    <location>
        <position position="873"/>
    </location>
</feature>
<feature type="sequence conflict" description="In Ref. 4; CAI46016." evidence="16" ref="4">
    <original>Q</original>
    <variation>R</variation>
    <location>
        <position position="134"/>
    </location>
</feature>
<feature type="sequence conflict" description="In Ref. 2; ABN42197." evidence="16" ref="2">
    <original>Q</original>
    <variation>R</variation>
    <location>
        <position position="195"/>
    </location>
</feature>
<feature type="sequence conflict" description="In Ref. 4; CAI46016 and 5; AAH09106." evidence="16" ref="4 5">
    <original>A</original>
    <variation>AE</variation>
    <location>
        <position position="262"/>
    </location>
</feature>
<feature type="sequence conflict" description="In Ref. 4; CAI46016." evidence="16" ref="4">
    <original>A</original>
    <variation>T</variation>
    <location>
        <position position="514"/>
    </location>
</feature>
<feature type="sequence conflict" description="In Ref. 4; CAI46016." evidence="16" ref="4">
    <original>A</original>
    <variation>S</variation>
    <location>
        <position position="929"/>
    </location>
</feature>
<keyword id="KW-0025">Alternative splicing</keyword>
<keyword id="KW-0256">Endoplasmic reticulum</keyword>
<keyword id="KW-0931">ER-Golgi transport</keyword>
<keyword id="KW-0333">Golgi apparatus</keyword>
<keyword id="KW-0472">Membrane</keyword>
<keyword id="KW-0962">Peroxisome biogenesis</keyword>
<keyword id="KW-0597">Phosphoprotein</keyword>
<keyword id="KW-0653">Protein transport</keyword>
<keyword id="KW-1267">Proteomics identification</keyword>
<keyword id="KW-1185">Reference proteome</keyword>
<keyword id="KW-0813">Transport</keyword>
<accession>Q96JE7</accession>
<accession>A3EYF1</accession>
<accession>Q5HYF6</accession>
<accession>Q8N7D6</accession>
<accession>Q96GX6</accession>
<evidence type="ECO:0000250" key="1"/>
<evidence type="ECO:0000250" key="2">
    <source>
        <dbReference type="UniProtKB" id="Q75N33"/>
    </source>
</evidence>
<evidence type="ECO:0000250" key="3">
    <source>
        <dbReference type="UniProtKB" id="Q91XT4"/>
    </source>
</evidence>
<evidence type="ECO:0000256" key="4">
    <source>
        <dbReference type="SAM" id="MobiDB-lite"/>
    </source>
</evidence>
<evidence type="ECO:0000269" key="5">
    <source>
    </source>
</evidence>
<evidence type="ECO:0000269" key="6">
    <source>
    </source>
</evidence>
<evidence type="ECO:0000269" key="7">
    <source>
    </source>
</evidence>
<evidence type="ECO:0000269" key="8">
    <source>
    </source>
</evidence>
<evidence type="ECO:0000269" key="9">
    <source>
    </source>
</evidence>
<evidence type="ECO:0000269" key="10">
    <source>
    </source>
</evidence>
<evidence type="ECO:0000269" key="11">
    <source>
    </source>
</evidence>
<evidence type="ECO:0000269" key="12">
    <source>
    </source>
</evidence>
<evidence type="ECO:0000303" key="13">
    <source>
    </source>
</evidence>
<evidence type="ECO:0000303" key="14">
    <source>
    </source>
</evidence>
<evidence type="ECO:0000303" key="15">
    <source>
    </source>
</evidence>
<evidence type="ECO:0000305" key="16"/>
<evidence type="ECO:0007744" key="17">
    <source>
    </source>
</evidence>
<dbReference type="EMBL" id="AB063357">
    <property type="protein sequence ID" value="BAB61035.1"/>
    <property type="molecule type" value="mRNA"/>
</dbReference>
<dbReference type="EMBL" id="EF125213">
    <property type="protein sequence ID" value="ABN42197.1"/>
    <property type="molecule type" value="mRNA"/>
</dbReference>
<dbReference type="EMBL" id="AK098627">
    <property type="protein sequence ID" value="BAC05357.1"/>
    <property type="molecule type" value="mRNA"/>
</dbReference>
<dbReference type="EMBL" id="BX647819">
    <property type="protein sequence ID" value="CAI46016.1"/>
    <property type="molecule type" value="mRNA"/>
</dbReference>
<dbReference type="EMBL" id="BC009106">
    <property type="protein sequence ID" value="AAH09106.1"/>
    <property type="molecule type" value="mRNA"/>
</dbReference>
<dbReference type="CCDS" id="CCDS44281.1">
    <molecule id="Q96JE7-1"/>
</dbReference>
<dbReference type="RefSeq" id="NP_001377762.1">
    <molecule id="Q96JE7-1"/>
    <property type="nucleotide sequence ID" value="NM_001390833.1"/>
</dbReference>
<dbReference type="RefSeq" id="NP_149118.2">
    <molecule id="Q96JE7-1"/>
    <property type="nucleotide sequence ID" value="NM_033127.4"/>
</dbReference>
<dbReference type="SMR" id="Q96JE7"/>
<dbReference type="BioGRID" id="124624">
    <property type="interactions" value="9"/>
</dbReference>
<dbReference type="FunCoup" id="Q96JE7">
    <property type="interactions" value="1231"/>
</dbReference>
<dbReference type="IntAct" id="Q96JE7">
    <property type="interactions" value="4"/>
</dbReference>
<dbReference type="STRING" id="9606.ENSP00000308339"/>
<dbReference type="GlyGen" id="Q96JE7">
    <property type="glycosylation" value="1 site"/>
</dbReference>
<dbReference type="iPTMnet" id="Q96JE7"/>
<dbReference type="PhosphoSitePlus" id="Q96JE7"/>
<dbReference type="BioMuta" id="SEC16B"/>
<dbReference type="DMDM" id="193806482"/>
<dbReference type="jPOST" id="Q96JE7"/>
<dbReference type="MassIVE" id="Q96JE7"/>
<dbReference type="PaxDb" id="9606-ENSP00000308339"/>
<dbReference type="PeptideAtlas" id="Q96JE7"/>
<dbReference type="ProteomicsDB" id="76948">
    <molecule id="Q96JE7-1"/>
</dbReference>
<dbReference type="ProteomicsDB" id="76949">
    <molecule id="Q96JE7-2"/>
</dbReference>
<dbReference type="ProteomicsDB" id="76950">
    <molecule id="Q96JE7-3"/>
</dbReference>
<dbReference type="TopDownProteomics" id="Q96JE7-1">
    <molecule id="Q96JE7-1"/>
</dbReference>
<dbReference type="Antibodypedia" id="35113">
    <property type="antibodies" value="118 antibodies from 28 providers"/>
</dbReference>
<dbReference type="DNASU" id="89866"/>
<dbReference type="Ensembl" id="ENST00000308284.11">
    <molecule id="Q96JE7-1"/>
    <property type="protein sequence ID" value="ENSP00000308339.6"/>
    <property type="gene ID" value="ENSG00000120341.19"/>
</dbReference>
<dbReference type="GeneID" id="89866"/>
<dbReference type="KEGG" id="hsa:89866"/>
<dbReference type="MANE-Select" id="ENST00000308284.11">
    <property type="protein sequence ID" value="ENSP00000308339.6"/>
    <property type="RefSeq nucleotide sequence ID" value="NM_033127.4"/>
    <property type="RefSeq protein sequence ID" value="NP_149118.2"/>
</dbReference>
<dbReference type="UCSC" id="uc001gli.2">
    <molecule id="Q96JE7-1"/>
    <property type="organism name" value="human"/>
</dbReference>
<dbReference type="AGR" id="HGNC:30301"/>
<dbReference type="AGR" id="HGNC:53757"/>
<dbReference type="CTD" id="89866"/>
<dbReference type="DisGeNET" id="89866"/>
<dbReference type="GeneCards" id="SEC16B"/>
<dbReference type="HGNC" id="HGNC:30301">
    <property type="gene designation" value="SEC16B"/>
</dbReference>
<dbReference type="HPA" id="ENSG00000120341">
    <property type="expression patterns" value="Tissue enhanced (intestine, liver)"/>
</dbReference>
<dbReference type="MIM" id="612855">
    <property type="type" value="gene"/>
</dbReference>
<dbReference type="neXtProt" id="NX_Q96JE7"/>
<dbReference type="OpenTargets" id="ENSG00000120341"/>
<dbReference type="PharmGKB" id="PA162402680"/>
<dbReference type="VEuPathDB" id="HostDB:ENSG00000120341"/>
<dbReference type="eggNOG" id="KOG1913">
    <property type="taxonomic scope" value="Eukaryota"/>
</dbReference>
<dbReference type="GeneTree" id="ENSGT00940000160138"/>
<dbReference type="HOGENOM" id="CLU_010575_0_0_1"/>
<dbReference type="InParanoid" id="Q96JE7"/>
<dbReference type="OMA" id="HPRDEGH"/>
<dbReference type="OrthoDB" id="8918678at2759"/>
<dbReference type="PAN-GO" id="Q96JE7">
    <property type="GO annotations" value="4 GO annotations based on evolutionary models"/>
</dbReference>
<dbReference type="PhylomeDB" id="Q96JE7"/>
<dbReference type="PathwayCommons" id="Q96JE7"/>
<dbReference type="Reactome" id="R-HSA-204005">
    <property type="pathway name" value="COPII-mediated vesicle transport"/>
</dbReference>
<dbReference type="SignaLink" id="Q96JE7"/>
<dbReference type="SIGNOR" id="Q96JE7"/>
<dbReference type="BioGRID-ORCS" id="89866">
    <property type="hits" value="6 hits in 1138 CRISPR screens"/>
</dbReference>
<dbReference type="GeneWiki" id="SEC16B"/>
<dbReference type="GenomeRNAi" id="89866"/>
<dbReference type="Pharos" id="Q96JE7">
    <property type="development level" value="Tbio"/>
</dbReference>
<dbReference type="PRO" id="PR:Q96JE7"/>
<dbReference type="Proteomes" id="UP000005640">
    <property type="component" value="Chromosome 1"/>
</dbReference>
<dbReference type="RNAct" id="Q96JE7">
    <property type="molecule type" value="protein"/>
</dbReference>
<dbReference type="Bgee" id="ENSG00000120341">
    <property type="expression patterns" value="Expressed in right lobe of liver and 93 other cell types or tissues"/>
</dbReference>
<dbReference type="ExpressionAtlas" id="Q96JE7">
    <property type="expression patterns" value="baseline and differential"/>
</dbReference>
<dbReference type="GO" id="GO:0005829">
    <property type="term" value="C:cytosol"/>
    <property type="evidence" value="ECO:0000304"/>
    <property type="project" value="Reactome"/>
</dbReference>
<dbReference type="GO" id="GO:0070971">
    <property type="term" value="C:endoplasmic reticulum exit site"/>
    <property type="evidence" value="ECO:0000314"/>
    <property type="project" value="UniProtKB"/>
</dbReference>
<dbReference type="GO" id="GO:0005789">
    <property type="term" value="C:endoplasmic reticulum membrane"/>
    <property type="evidence" value="ECO:0007669"/>
    <property type="project" value="UniProtKB-SubCell"/>
</dbReference>
<dbReference type="GO" id="GO:0012507">
    <property type="term" value="C:ER to Golgi transport vesicle membrane"/>
    <property type="evidence" value="ECO:0000318"/>
    <property type="project" value="GO_Central"/>
</dbReference>
<dbReference type="GO" id="GO:0000139">
    <property type="term" value="C:Golgi membrane"/>
    <property type="evidence" value="ECO:0007669"/>
    <property type="project" value="UniProtKB-SubCell"/>
</dbReference>
<dbReference type="GO" id="GO:0043231">
    <property type="term" value="C:intracellular membrane-bounded organelle"/>
    <property type="evidence" value="ECO:0000314"/>
    <property type="project" value="UniProtKB"/>
</dbReference>
<dbReference type="GO" id="GO:0007029">
    <property type="term" value="P:endoplasmic reticulum organization"/>
    <property type="evidence" value="ECO:0000314"/>
    <property type="project" value="UniProtKB"/>
</dbReference>
<dbReference type="GO" id="GO:0006888">
    <property type="term" value="P:endoplasmic reticulum to Golgi vesicle-mediated transport"/>
    <property type="evidence" value="ECO:0000315"/>
    <property type="project" value="UniProtKB"/>
</dbReference>
<dbReference type="GO" id="GO:0007030">
    <property type="term" value="P:Golgi organization"/>
    <property type="evidence" value="ECO:0000318"/>
    <property type="project" value="GO_Central"/>
</dbReference>
<dbReference type="GO" id="GO:0016559">
    <property type="term" value="P:peroxisome fission"/>
    <property type="evidence" value="ECO:0000315"/>
    <property type="project" value="UniProtKB"/>
</dbReference>
<dbReference type="GO" id="GO:0007031">
    <property type="term" value="P:peroxisome organization"/>
    <property type="evidence" value="ECO:0000314"/>
    <property type="project" value="UniProtKB"/>
</dbReference>
<dbReference type="GO" id="GO:0010628">
    <property type="term" value="P:positive regulation of gene expression"/>
    <property type="evidence" value="ECO:0000315"/>
    <property type="project" value="UniProtKB"/>
</dbReference>
<dbReference type="GO" id="GO:0070863">
    <property type="term" value="P:positive regulation of protein exit from endoplasmic reticulum"/>
    <property type="evidence" value="ECO:0000315"/>
    <property type="project" value="UniProtKB"/>
</dbReference>
<dbReference type="GO" id="GO:0070973">
    <property type="term" value="P:protein localization to endoplasmic reticulum exit site"/>
    <property type="evidence" value="ECO:0000318"/>
    <property type="project" value="GO_Central"/>
</dbReference>
<dbReference type="GO" id="GO:0015031">
    <property type="term" value="P:protein transport"/>
    <property type="evidence" value="ECO:0007669"/>
    <property type="project" value="UniProtKB-KW"/>
</dbReference>
<dbReference type="CDD" id="cd09233">
    <property type="entry name" value="ACE1-Sec16-like"/>
    <property type="match status" value="1"/>
</dbReference>
<dbReference type="FunFam" id="1.25.40.1030:FF:000003">
    <property type="entry name" value="Protein transport protein sec16"/>
    <property type="match status" value="1"/>
</dbReference>
<dbReference type="Gene3D" id="1.25.40.1030">
    <property type="match status" value="1"/>
</dbReference>
<dbReference type="InterPro" id="IPR024340">
    <property type="entry name" value="Sec16_CCD"/>
</dbReference>
<dbReference type="InterPro" id="IPR024298">
    <property type="entry name" value="Sec16_Sec23-bd"/>
</dbReference>
<dbReference type="PANTHER" id="PTHR13402:SF11">
    <property type="entry name" value="PROTEIN TRANSPORT PROTEIN SEC16B"/>
    <property type="match status" value="1"/>
</dbReference>
<dbReference type="PANTHER" id="PTHR13402">
    <property type="entry name" value="RGPR-RELATED"/>
    <property type="match status" value="1"/>
</dbReference>
<dbReference type="Pfam" id="PF12932">
    <property type="entry name" value="Sec16"/>
    <property type="match status" value="1"/>
</dbReference>
<dbReference type="Pfam" id="PF12931">
    <property type="entry name" value="TPR_Sec16"/>
    <property type="match status" value="1"/>
</dbReference>
<sequence length="1060" mass="116604">MELWAPQRLPQTRGKATAPSKDPDRGFRRDGHHRPVPHSWHNGERFHQWQDNRGSPQPQQEPRADHQQQPHYASRPGDWHQPVSGVDYYEGGYRNQLYSRPGYENSYQSYQSPTMREEYAYGSYYYHGHPQWLQEERVPRQRSPYIWHEDYREQKYLDEHHYENQHSPFGTNSETHFQSNSRNPCKDSPASNSGQEWPGELFPGSLLAEAQKNKPSLASESNLLQQRESGLSSSSYELSQYIRDAPERDDPPASAAWSPVQADVSSAGPKAPMKFYIPHVPVSFGPGGQLVHVGPSSPTDGQAALVELHSMEVILNDSEEQEEMRSFSGPLIREDVHKVDIMTFCQQKAAQSCKSETLGSRDSALLWQLLVLLCRQNGSMVGSDIAELLMQDCKKLEKYKRQPPVANLINLTDEDWPVLSSGTPNLLTGEIPPSVETPAQIVEKFTRLLYYGRKKEALEWAMKNHLWGHALFLSSKMDPQTYSWVMSGFTSTLALNDPLQTLFQLMSGRIPQAATCCGEKQWGDWRPHLAVILSNQAGDPELYQRAIVAIGDTLAGKGLVEAAHFCYLMAHVPFGHYTVKTDHLVLLGSSHSQEFLKFATTEAIQRTEIFEYCQMLGRPKSFIPSFQVYKLLYASRLADYGLVSQALHYCEAIGAAVLSQGESSHPVLLVELIKLAEKLKLSDPLVLERRSGDRDLEPDWLAQLRRQLEQKVAGDIGDPHPTRSDISGAGGTTTENTFYQDFSGCQGYSEAPGYRSALWLTPEQTCLLQPSPQQPFPLQPGSYPAGGGAGQTGTPRPFYSVPETHLPGTGSSVAVTEATGGTVWEEMLQTHLGPGENTVSQETSQPPDGQEVISKPQTPLAARPRSISESSASSAKEDEKESSDEADKNSPRNTAQRGKLGDGKEHTKSSGFGWFSWFRSKPTKNASPAGDEDSSDSPDSEETPRASSPHQAGLGLSLTPSPESPPLPDVSAFSRGRGGGEGRGSASSGGAAAGAGVGGLSGPESVSFELCSNPGVLLPPPALKGAVPLYNPSQVPQLPTATSLNRPNRLAQRRYPTQPC</sequence>
<reference key="1">
    <citation type="journal article" date="2001" name="Int. J. Mol. Med.">
        <title>Molecular cloning and sequencing of the cDNA coding for a novel regucalcin gene promoter region-related protein in rat, mouse and human liver.</title>
        <authorList>
            <person name="Misawa H."/>
            <person name="Yamaguchi M."/>
        </authorList>
    </citation>
    <scope>NUCLEOTIDE SEQUENCE [MRNA] (ISOFORM 1)</scope>
    <scope>VARIANT ARG-730</scope>
    <source>
        <tissue>Liver</tissue>
    </source>
</reference>
<reference key="2">
    <citation type="journal article" date="2007" name="Mol. Biol. Cell">
        <title>Two mammalian Sec16 homologues have nonredundant functions in endoplasmic reticulum (ER) export and transitional ER organization.</title>
        <authorList>
            <person name="Bhattacharyya D."/>
            <person name="Glick B.S."/>
        </authorList>
    </citation>
    <scope>NUCLEOTIDE SEQUENCE [MRNA] (ISOFORM 1)</scope>
    <scope>VARIANT ARG-292</scope>
    <scope>FUNCTION</scope>
    <scope>SUBUNIT</scope>
    <scope>SUBCELLULAR LOCATION</scope>
    <scope>TISSUE SPECIFICITY</scope>
    <source>
        <tissue>Liver</tissue>
    </source>
</reference>
<reference key="3">
    <citation type="journal article" date="2004" name="Nat. Genet.">
        <title>Complete sequencing and characterization of 21,243 full-length human cDNAs.</title>
        <authorList>
            <person name="Ota T."/>
            <person name="Suzuki Y."/>
            <person name="Nishikawa T."/>
            <person name="Otsuki T."/>
            <person name="Sugiyama T."/>
            <person name="Irie R."/>
            <person name="Wakamatsu A."/>
            <person name="Hayashi K."/>
            <person name="Sato H."/>
            <person name="Nagai K."/>
            <person name="Kimura K."/>
            <person name="Makita H."/>
            <person name="Sekine M."/>
            <person name="Obayashi M."/>
            <person name="Nishi T."/>
            <person name="Shibahara T."/>
            <person name="Tanaka T."/>
            <person name="Ishii S."/>
            <person name="Yamamoto J."/>
            <person name="Saito K."/>
            <person name="Kawai Y."/>
            <person name="Isono Y."/>
            <person name="Nakamura Y."/>
            <person name="Nagahari K."/>
            <person name="Murakami K."/>
            <person name="Yasuda T."/>
            <person name="Iwayanagi T."/>
            <person name="Wagatsuma M."/>
            <person name="Shiratori A."/>
            <person name="Sudo H."/>
            <person name="Hosoiri T."/>
            <person name="Kaku Y."/>
            <person name="Kodaira H."/>
            <person name="Kondo H."/>
            <person name="Sugawara M."/>
            <person name="Takahashi M."/>
            <person name="Kanda K."/>
            <person name="Yokoi T."/>
            <person name="Furuya T."/>
            <person name="Kikkawa E."/>
            <person name="Omura Y."/>
            <person name="Abe K."/>
            <person name="Kamihara K."/>
            <person name="Katsuta N."/>
            <person name="Sato K."/>
            <person name="Tanikawa M."/>
            <person name="Yamazaki M."/>
            <person name="Ninomiya K."/>
            <person name="Ishibashi T."/>
            <person name="Yamashita H."/>
            <person name="Murakawa K."/>
            <person name="Fujimori K."/>
            <person name="Tanai H."/>
            <person name="Kimata M."/>
            <person name="Watanabe M."/>
            <person name="Hiraoka S."/>
            <person name="Chiba Y."/>
            <person name="Ishida S."/>
            <person name="Ono Y."/>
            <person name="Takiguchi S."/>
            <person name="Watanabe S."/>
            <person name="Yosida M."/>
            <person name="Hotuta T."/>
            <person name="Kusano J."/>
            <person name="Kanehori K."/>
            <person name="Takahashi-Fujii A."/>
            <person name="Hara H."/>
            <person name="Tanase T.-O."/>
            <person name="Nomura Y."/>
            <person name="Togiya S."/>
            <person name="Komai F."/>
            <person name="Hara R."/>
            <person name="Takeuchi K."/>
            <person name="Arita M."/>
            <person name="Imose N."/>
            <person name="Musashino K."/>
            <person name="Yuuki H."/>
            <person name="Oshima A."/>
            <person name="Sasaki N."/>
            <person name="Aotsuka S."/>
            <person name="Yoshikawa Y."/>
            <person name="Matsunawa H."/>
            <person name="Ichihara T."/>
            <person name="Shiohata N."/>
            <person name="Sano S."/>
            <person name="Moriya S."/>
            <person name="Momiyama H."/>
            <person name="Satoh N."/>
            <person name="Takami S."/>
            <person name="Terashima Y."/>
            <person name="Suzuki O."/>
            <person name="Nakagawa S."/>
            <person name="Senoh A."/>
            <person name="Mizoguchi H."/>
            <person name="Goto Y."/>
            <person name="Shimizu F."/>
            <person name="Wakebe H."/>
            <person name="Hishigaki H."/>
            <person name="Watanabe T."/>
            <person name="Sugiyama A."/>
            <person name="Takemoto M."/>
            <person name="Kawakami B."/>
            <person name="Yamazaki M."/>
            <person name="Watanabe K."/>
            <person name="Kumagai A."/>
            <person name="Itakura S."/>
            <person name="Fukuzumi Y."/>
            <person name="Fujimori Y."/>
            <person name="Komiyama M."/>
            <person name="Tashiro H."/>
            <person name="Tanigami A."/>
            <person name="Fujiwara T."/>
            <person name="Ono T."/>
            <person name="Yamada K."/>
            <person name="Fujii Y."/>
            <person name="Ozaki K."/>
            <person name="Hirao M."/>
            <person name="Ohmori Y."/>
            <person name="Kawabata A."/>
            <person name="Hikiji T."/>
            <person name="Kobatake N."/>
            <person name="Inagaki H."/>
            <person name="Ikema Y."/>
            <person name="Okamoto S."/>
            <person name="Okitani R."/>
            <person name="Kawakami T."/>
            <person name="Noguchi S."/>
            <person name="Itoh T."/>
            <person name="Shigeta K."/>
            <person name="Senba T."/>
            <person name="Matsumura K."/>
            <person name="Nakajima Y."/>
            <person name="Mizuno T."/>
            <person name="Morinaga M."/>
            <person name="Sasaki M."/>
            <person name="Togashi T."/>
            <person name="Oyama M."/>
            <person name="Hata H."/>
            <person name="Watanabe M."/>
            <person name="Komatsu T."/>
            <person name="Mizushima-Sugano J."/>
            <person name="Satoh T."/>
            <person name="Shirai Y."/>
            <person name="Takahashi Y."/>
            <person name="Nakagawa K."/>
            <person name="Okumura K."/>
            <person name="Nagase T."/>
            <person name="Nomura N."/>
            <person name="Kikuchi H."/>
            <person name="Masuho Y."/>
            <person name="Yamashita R."/>
            <person name="Nakai K."/>
            <person name="Yada T."/>
            <person name="Nakamura Y."/>
            <person name="Ohara O."/>
            <person name="Isogai T."/>
            <person name="Sugano S."/>
        </authorList>
    </citation>
    <scope>NUCLEOTIDE SEQUENCE [LARGE SCALE MRNA] (ISOFORM 3)</scope>
    <source>
        <tissue>Testis</tissue>
    </source>
</reference>
<reference key="4">
    <citation type="journal article" date="2007" name="BMC Genomics">
        <title>The full-ORF clone resource of the German cDNA consortium.</title>
        <authorList>
            <person name="Bechtel S."/>
            <person name="Rosenfelder H."/>
            <person name="Duda A."/>
            <person name="Schmidt C.P."/>
            <person name="Ernst U."/>
            <person name="Wellenreuther R."/>
            <person name="Mehrle A."/>
            <person name="Schuster C."/>
            <person name="Bahr A."/>
            <person name="Bloecker H."/>
            <person name="Heubner D."/>
            <person name="Hoerlein A."/>
            <person name="Michel G."/>
            <person name="Wedler H."/>
            <person name="Koehrer K."/>
            <person name="Ottenwaelder B."/>
            <person name="Poustka A."/>
            <person name="Wiemann S."/>
            <person name="Schupp I."/>
        </authorList>
    </citation>
    <scope>NUCLEOTIDE SEQUENCE [LARGE SCALE MRNA] (ISOFORM 1)</scope>
    <scope>VARIANTS HIS-845; ALA-864 AND ASN-873</scope>
    <source>
        <tissue>Retina</tissue>
    </source>
</reference>
<reference key="5">
    <citation type="journal article" date="2004" name="Genome Res.">
        <title>The status, quality, and expansion of the NIH full-length cDNA project: the Mammalian Gene Collection (MGC).</title>
        <authorList>
            <consortium name="The MGC Project Team"/>
        </authorList>
    </citation>
    <scope>NUCLEOTIDE SEQUENCE [LARGE SCALE MRNA] (ISOFORM 2)</scope>
    <scope>VARIANT ARG-292</scope>
    <source>
        <tissue>Placenta</tissue>
    </source>
</reference>
<reference key="6">
    <citation type="journal article" date="2002" name="J. Cell. Biochem.">
        <title>Gene expression for a novel protein RGPR-p117 in various species: the stimulation by intracellular signaling factors.</title>
        <authorList>
            <person name="Misawa H."/>
            <person name="Yamaguchi M."/>
        </authorList>
    </citation>
    <scope>TISSUE SPECIFICITY</scope>
</reference>
<reference key="7">
    <citation type="journal article" date="2011" name="Nat. Cell Biol.">
        <title>TFG-1 function in protein secretion and oncogenesis.</title>
        <authorList>
            <person name="Witte K."/>
            <person name="Schuh A.L."/>
            <person name="Hegermann J."/>
            <person name="Sarkeshik A."/>
            <person name="Mayers J.R."/>
            <person name="Schwarze K."/>
            <person name="Yates J.R. III"/>
            <person name="Eimer S."/>
            <person name="Audhya A."/>
        </authorList>
    </citation>
    <scope>INTERACTION WITH TFG</scope>
    <scope>SUBCELLULAR LOCATION</scope>
</reference>
<reference key="8">
    <citation type="journal article" date="2011" name="Proc. Natl. Acad. Sci. U.S.A.">
        <title>Sec16B is involved in the endoplasmic reticulum export of the peroxisomal membrane biogenesis factor peroxin 16 (Pex16) in mammalian cells.</title>
        <authorList>
            <person name="Yonekawa S."/>
            <person name="Furuno A."/>
            <person name="Baba T."/>
            <person name="Fujiki Y."/>
            <person name="Ogasawara Y."/>
            <person name="Yamamoto A."/>
            <person name="Tagaya M."/>
            <person name="Tani K."/>
        </authorList>
    </citation>
    <scope>FUNCTION</scope>
    <scope>SUBCELLULAR LOCATION</scope>
</reference>
<reference key="9">
    <citation type="journal article" date="2011" name="Sci. Rep.">
        <title>Characterization of human Sec16B: indications of specialized, non-redundant functions.</title>
        <authorList>
            <person name="Budnik A."/>
            <person name="Heesom K.J."/>
            <person name="Stephens D.J."/>
        </authorList>
    </citation>
    <scope>FUNCTION</scope>
    <scope>SUBCELLULAR LOCATION</scope>
    <scope>INTERACTION WITH SEC16A AND SEC13</scope>
</reference>
<reference key="10">
    <citation type="journal article" date="2014" name="J. Proteomics">
        <title>An enzyme assisted RP-RPLC approach for in-depth analysis of human liver phosphoproteome.</title>
        <authorList>
            <person name="Bian Y."/>
            <person name="Song C."/>
            <person name="Cheng K."/>
            <person name="Dong M."/>
            <person name="Wang F."/>
            <person name="Huang J."/>
            <person name="Sun D."/>
            <person name="Wang L."/>
            <person name="Ye M."/>
            <person name="Zou H."/>
        </authorList>
    </citation>
    <scope>PHOSPHORYLATION [LARGE SCALE ANALYSIS] AT SER-55; SER-167; SER-254; SER-258 AND THR-858</scope>
    <scope>IDENTIFICATION BY MASS SPECTROMETRY [LARGE SCALE ANALYSIS]</scope>
    <source>
        <tissue>Liver</tissue>
    </source>
</reference>
<organism>
    <name type="scientific">Homo sapiens</name>
    <name type="common">Human</name>
    <dbReference type="NCBI Taxonomy" id="9606"/>
    <lineage>
        <taxon>Eukaryota</taxon>
        <taxon>Metazoa</taxon>
        <taxon>Chordata</taxon>
        <taxon>Craniata</taxon>
        <taxon>Vertebrata</taxon>
        <taxon>Euteleostomi</taxon>
        <taxon>Mammalia</taxon>
        <taxon>Eutheria</taxon>
        <taxon>Euarchontoglires</taxon>
        <taxon>Primates</taxon>
        <taxon>Haplorrhini</taxon>
        <taxon>Catarrhini</taxon>
        <taxon>Hominidae</taxon>
        <taxon>Homo</taxon>
    </lineage>
</organism>
<comment type="function">
    <text evidence="8 11 15">Plays a role in the organization of the endoplasmic reticulum exit sites (ERES), also known as transitional endoplasmic reticulum (tER). Required for secretory cargo traffic from the endoplasmic reticulum to the Golgi apparatus (PubMed:17192411, PubMed:21768384, PubMed:22355596). Involved in peroxisome biogenesis. Regulates the transport of peroxisomal biogenesis factors PEX3 and PEX16 from the ER to peroxisomes (PubMed:21768384).</text>
</comment>
<comment type="subunit">
    <text evidence="8 10 12">SEC16A and SEC16B are each present in multiple copies in a heteromeric complex (PubMed:17192411, PubMed:22355596). Interacts with TFG (PubMed:21478858). Interacts with SEC13 (PubMed:22355596).</text>
</comment>
<comment type="interaction">
    <interactant intactId="EBI-749897">
        <id>Q96JE7</id>
    </interactant>
    <interactant intactId="EBI-1046596">
        <id>P55735</id>
        <label>SEC13</label>
    </interactant>
    <organismsDiffer>false</organismsDiffer>
    <experiments>3</experiments>
</comment>
<comment type="interaction">
    <interactant intactId="EBI-10215083">
        <id>Q96JE7-2</id>
    </interactant>
    <interactant intactId="EBI-1046596">
        <id>P55735</id>
        <label>SEC13</label>
    </interactant>
    <organismsDiffer>false</organismsDiffer>
    <experiments>6</experiments>
</comment>
<comment type="subcellular location">
    <subcellularLocation>
        <location evidence="11">Endoplasmic reticulum membrane</location>
        <topology evidence="1">Peripheral membrane protein</topology>
    </subcellularLocation>
    <subcellularLocation>
        <location evidence="1">Golgi apparatus membrane</location>
        <topology evidence="1">Peripheral membrane protein</topology>
    </subcellularLocation>
    <text evidence="8 10 11 12">Localizes to endoplasmic reticulum exit sites (ERES), also known as transitional endoplasmic reticulum (tER).</text>
</comment>
<comment type="alternative products">
    <event type="alternative splicing"/>
    <isoform>
        <id>Q96JE7-1</id>
        <name>1</name>
        <sequence type="displayed"/>
    </isoform>
    <isoform>
        <id>Q96JE7-2</id>
        <name>2</name>
        <sequence type="described" ref="VSP_034373 VSP_034374"/>
    </isoform>
    <isoform>
        <id>Q96JE7-3</id>
        <name>3</name>
        <sequence type="described" ref="VSP_034371 VSP_034372 VSP_034375 VSP_034376"/>
    </isoform>
</comment>
<comment type="tissue specificity">
    <text evidence="6 8">Ubiquitous.</text>
</comment>
<comment type="similarity">
    <text evidence="16">Belongs to the SEC16 family.</text>
</comment>
<gene>
    <name type="primary">SEC16B</name>
    <name type="synonym">KIAA1928</name>
    <name type="synonym">LZTR2</name>
    <name type="synonym">RGPR</name>
    <name type="synonym">SEC16S</name>
</gene>